<accession>P91753</accession>
<evidence type="ECO:0000256" key="1">
    <source>
        <dbReference type="SAM" id="MobiDB-lite"/>
    </source>
</evidence>
<evidence type="ECO:0000305" key="2"/>
<organism>
    <name type="scientific">Lytechinus pictus</name>
    <name type="common">Painted sea urchin</name>
    <dbReference type="NCBI Taxonomy" id="7653"/>
    <lineage>
        <taxon>Eukaryota</taxon>
        <taxon>Metazoa</taxon>
        <taxon>Echinodermata</taxon>
        <taxon>Eleutherozoa</taxon>
        <taxon>Echinozoa</taxon>
        <taxon>Echinoidea</taxon>
        <taxon>Euechinoidea</taxon>
        <taxon>Echinacea</taxon>
        <taxon>Temnopleuroida</taxon>
        <taxon>Toxopneustidae</taxon>
        <taxon>Lytechinus</taxon>
    </lineage>
</organism>
<dbReference type="EMBL" id="U76750">
    <property type="protein sequence ID" value="AAB47481.1"/>
    <property type="molecule type" value="mRNA"/>
</dbReference>
<dbReference type="SMR" id="P91753"/>
<dbReference type="OrthoDB" id="6075101at2759"/>
<dbReference type="GO" id="GO:0005737">
    <property type="term" value="C:cytoplasm"/>
    <property type="evidence" value="ECO:0007669"/>
    <property type="project" value="TreeGrafter"/>
</dbReference>
<dbReference type="GO" id="GO:0005730">
    <property type="term" value="C:nucleolus"/>
    <property type="evidence" value="ECO:0007669"/>
    <property type="project" value="TreeGrafter"/>
</dbReference>
<dbReference type="GO" id="GO:0005654">
    <property type="term" value="C:nucleoplasm"/>
    <property type="evidence" value="ECO:0007669"/>
    <property type="project" value="TreeGrafter"/>
</dbReference>
<dbReference type="GO" id="GO:0003682">
    <property type="term" value="F:chromatin binding"/>
    <property type="evidence" value="ECO:0007669"/>
    <property type="project" value="TreeGrafter"/>
</dbReference>
<dbReference type="GO" id="GO:0042393">
    <property type="term" value="F:histone binding"/>
    <property type="evidence" value="ECO:0007669"/>
    <property type="project" value="TreeGrafter"/>
</dbReference>
<dbReference type="GO" id="GO:0003723">
    <property type="term" value="F:RNA binding"/>
    <property type="evidence" value="ECO:0007669"/>
    <property type="project" value="TreeGrafter"/>
</dbReference>
<dbReference type="GO" id="GO:0051301">
    <property type="term" value="P:cell division"/>
    <property type="evidence" value="ECO:0007669"/>
    <property type="project" value="UniProtKB-KW"/>
</dbReference>
<dbReference type="GO" id="GO:0006338">
    <property type="term" value="P:chromatin remodeling"/>
    <property type="evidence" value="ECO:0007669"/>
    <property type="project" value="TreeGrafter"/>
</dbReference>
<dbReference type="FunFam" id="1.10.10.2100:FF:000002">
    <property type="entry name" value="cell growth-regulating nucleolar protein-like"/>
    <property type="match status" value="1"/>
</dbReference>
<dbReference type="FunFam" id="2.60.120.340:FF:000007">
    <property type="entry name" value="Nucleophosmin 1a"/>
    <property type="match status" value="1"/>
</dbReference>
<dbReference type="Gene3D" id="1.10.10.2100">
    <property type="match status" value="1"/>
</dbReference>
<dbReference type="Gene3D" id="2.60.120.340">
    <property type="entry name" value="Nucleoplasmin core domain"/>
    <property type="match status" value="1"/>
</dbReference>
<dbReference type="InterPro" id="IPR004301">
    <property type="entry name" value="Nucleoplasmin"/>
</dbReference>
<dbReference type="InterPro" id="IPR024057">
    <property type="entry name" value="Nucleoplasmin_core_dom"/>
</dbReference>
<dbReference type="InterPro" id="IPR036824">
    <property type="entry name" value="Nucleoplasmin_core_dom_sf"/>
</dbReference>
<dbReference type="PANTHER" id="PTHR22747:SF18">
    <property type="entry name" value="GEO09167P1-RELATED"/>
    <property type="match status" value="1"/>
</dbReference>
<dbReference type="PANTHER" id="PTHR22747">
    <property type="entry name" value="NUCLEOPLASMIN"/>
    <property type="match status" value="1"/>
</dbReference>
<dbReference type="Pfam" id="PF03066">
    <property type="entry name" value="Nucleoplasmin"/>
    <property type="match status" value="1"/>
</dbReference>
<dbReference type="SUPFAM" id="SSF69203">
    <property type="entry name" value="Nucleoplasmin-like core domain"/>
    <property type="match status" value="1"/>
</dbReference>
<comment type="function">
    <text>Required for mitotic progression. Binds to chromatin.</text>
</comment>
<comment type="subcellular location">
    <subcellularLocation>
        <location>Nucleus</location>
    </subcellularLocation>
</comment>
<comment type="PTM">
    <text>Phosphorylated by CaM-kinase II in vitro.</text>
</comment>
<comment type="similarity">
    <text evidence="2">Belongs to the nucleoplasmin family.</text>
</comment>
<protein>
    <recommendedName>
        <fullName>Mitotic apparatus protein p62</fullName>
    </recommendedName>
</protein>
<sequence length="411" mass="46386">MAKEYFWGATLSKDKKIFKWDPESDFLDDEDDDEEDSISHFLFLKQAVLGVNAKDDDRNVIEVETINFDGETVIQPLLSLRLGLNESTNLDIGLQPPVTFKLALGSGPVYLSGQHALDLQEDEEFGKDFEGAEAYEVGDEDLEDEDEGEEDEEEEETPKKGSPKRIVKKIAAVKGRMKGKGDELDEDEDDDEEEEEEEEEIQTAKGKKRPAPSAKGPAKKLAKVDKDGTSKRKVPNGSVENGHAIDDDEDDEEDEDYKVGDEEEEEEATSGEEEEEDEEEEEEEDDEEMALGDDDDEDDDEEDDEDEEGMDDEDEEEEEDSSPVKPAKKAKGKVNGTAKPKGTPKSQANKGMKEKKTYSLEDMKQDLIKSPSKPKKEEKFKNFVKSKFHLSEGKKIQELWGWYKSTQLTAK</sequence>
<proteinExistence type="evidence at transcript level"/>
<feature type="chain" id="PRO_0000219494" description="Mitotic apparatus protein p62">
    <location>
        <begin position="1"/>
        <end position="411"/>
    </location>
</feature>
<feature type="region of interest" description="Disordered" evidence="1">
    <location>
        <begin position="134"/>
        <end position="378"/>
    </location>
</feature>
<feature type="compositionally biased region" description="Acidic residues" evidence="1">
    <location>
        <begin position="134"/>
        <end position="156"/>
    </location>
</feature>
<feature type="compositionally biased region" description="Acidic residues" evidence="1">
    <location>
        <begin position="183"/>
        <end position="201"/>
    </location>
</feature>
<feature type="compositionally biased region" description="Acidic residues" evidence="1">
    <location>
        <begin position="246"/>
        <end position="321"/>
    </location>
</feature>
<feature type="compositionally biased region" description="Basic and acidic residues" evidence="1">
    <location>
        <begin position="351"/>
        <end position="367"/>
    </location>
</feature>
<name>MP62_LYTPI</name>
<reference key="1">
    <citation type="journal article" date="1997" name="J. Biol. Chem.">
        <title>Molecular characterization of p62, a mitotic apparatus protein required for mitotic progression.</title>
        <authorList>
            <person name="Ye X."/>
            <person name="Sloboda R.D."/>
        </authorList>
    </citation>
    <scope>NUCLEOTIDE SEQUENCE [MRNA]</scope>
</reference>
<keyword id="KW-0131">Cell cycle</keyword>
<keyword id="KW-0132">Cell division</keyword>
<keyword id="KW-0498">Mitosis</keyword>
<keyword id="KW-0539">Nucleus</keyword>
<keyword id="KW-0597">Phosphoprotein</keyword>